<gene>
    <name evidence="2" type="primary">mdtL</name>
    <name type="ordered locus">UTI89_C4263</name>
</gene>
<protein>
    <recommendedName>
        <fullName evidence="2">Multidrug resistance protein MdtL</fullName>
    </recommendedName>
</protein>
<reference key="1">
    <citation type="journal article" date="2006" name="Proc. Natl. Acad. Sci. U.S.A.">
        <title>Identification of genes subject to positive selection in uropathogenic strains of Escherichia coli: a comparative genomics approach.</title>
        <authorList>
            <person name="Chen S.L."/>
            <person name="Hung C.-S."/>
            <person name="Xu J."/>
            <person name="Reigstad C.S."/>
            <person name="Magrini V."/>
            <person name="Sabo A."/>
            <person name="Blasiar D."/>
            <person name="Bieri T."/>
            <person name="Meyer R.R."/>
            <person name="Ozersky P."/>
            <person name="Armstrong J.R."/>
            <person name="Fulton R.S."/>
            <person name="Latreille J.P."/>
            <person name="Spieth J."/>
            <person name="Hooton T.M."/>
            <person name="Mardis E.R."/>
            <person name="Hultgren S.J."/>
            <person name="Gordon J.I."/>
        </authorList>
    </citation>
    <scope>NUCLEOTIDE SEQUENCE [LARGE SCALE GENOMIC DNA]</scope>
    <source>
        <strain>UTI89 / UPEC</strain>
    </source>
</reference>
<organism>
    <name type="scientific">Escherichia coli (strain UTI89 / UPEC)</name>
    <dbReference type="NCBI Taxonomy" id="364106"/>
    <lineage>
        <taxon>Bacteria</taxon>
        <taxon>Pseudomonadati</taxon>
        <taxon>Pseudomonadota</taxon>
        <taxon>Gammaproteobacteria</taxon>
        <taxon>Enterobacterales</taxon>
        <taxon>Enterobacteriaceae</taxon>
        <taxon>Escherichia</taxon>
    </lineage>
</organism>
<proteinExistence type="inferred from homology"/>
<evidence type="ECO:0000255" key="1"/>
<evidence type="ECO:0000255" key="2">
    <source>
        <dbReference type="HAMAP-Rule" id="MF_01530"/>
    </source>
</evidence>
<accession>Q1R4M4</accession>
<feature type="chain" id="PRO_0000281998" description="Multidrug resistance protein MdtL">
    <location>
        <begin position="1"/>
        <end position="391"/>
    </location>
</feature>
<feature type="topological domain" description="Cytoplasmic" evidence="1">
    <location>
        <begin position="1"/>
        <end position="3"/>
    </location>
</feature>
<feature type="transmembrane region" description="Helical" evidence="2">
    <location>
        <begin position="4"/>
        <end position="24"/>
    </location>
</feature>
<feature type="topological domain" description="Periplasmic" evidence="1">
    <location>
        <begin position="25"/>
        <end position="41"/>
    </location>
</feature>
<feature type="transmembrane region" description="Helical" evidence="2">
    <location>
        <begin position="42"/>
        <end position="62"/>
    </location>
</feature>
<feature type="topological domain" description="Cytoplasmic" evidence="1">
    <location>
        <begin position="63"/>
        <end position="68"/>
    </location>
</feature>
<feature type="transmembrane region" description="Helical" evidence="2">
    <location>
        <begin position="69"/>
        <end position="89"/>
    </location>
</feature>
<feature type="topological domain" description="Periplasmic" evidence="1">
    <location>
        <begin position="90"/>
        <end position="92"/>
    </location>
</feature>
<feature type="transmembrane region" description="Helical" evidence="2">
    <location>
        <begin position="93"/>
        <end position="113"/>
    </location>
</feature>
<feature type="topological domain" description="Cytoplasmic" evidence="1">
    <location>
        <begin position="114"/>
        <end position="130"/>
    </location>
</feature>
<feature type="transmembrane region" description="Helical" evidence="2">
    <location>
        <begin position="131"/>
        <end position="151"/>
    </location>
</feature>
<feature type="topological domain" description="Periplasmic" evidence="1">
    <location>
        <begin position="152"/>
        <end position="157"/>
    </location>
</feature>
<feature type="transmembrane region" description="Helical" evidence="2">
    <location>
        <begin position="158"/>
        <end position="178"/>
    </location>
</feature>
<feature type="topological domain" description="Cytoplasmic" evidence="1">
    <location>
        <begin position="179"/>
        <end position="202"/>
    </location>
</feature>
<feature type="transmembrane region" description="Helical" evidence="2">
    <location>
        <begin position="203"/>
        <end position="222"/>
    </location>
</feature>
<feature type="topological domain" description="Periplasmic" evidence="1">
    <location>
        <begin position="223"/>
        <end position="244"/>
    </location>
</feature>
<feature type="transmembrane region" description="Helical" evidence="2">
    <location>
        <begin position="245"/>
        <end position="265"/>
    </location>
</feature>
<feature type="topological domain" description="Cytoplasmic" evidence="1">
    <location>
        <begin position="266"/>
        <end position="268"/>
    </location>
</feature>
<feature type="transmembrane region" description="Helical" evidence="2">
    <location>
        <begin position="269"/>
        <end position="289"/>
    </location>
</feature>
<feature type="topological domain" description="Periplasmic" evidence="1">
    <location>
        <begin position="290"/>
        <end position="292"/>
    </location>
</feature>
<feature type="transmembrane region" description="Helical" evidence="2">
    <location>
        <begin position="293"/>
        <end position="313"/>
    </location>
</feature>
<feature type="topological domain" description="Cytoplasmic" evidence="1">
    <location>
        <begin position="314"/>
        <end position="330"/>
    </location>
</feature>
<feature type="transmembrane region" description="Helical" evidence="2">
    <location>
        <begin position="331"/>
        <end position="351"/>
    </location>
</feature>
<feature type="topological domain" description="Periplasmic" evidence="1">
    <location>
        <begin position="352"/>
        <end position="355"/>
    </location>
</feature>
<feature type="transmembrane region" description="Helical" evidence="2">
    <location>
        <begin position="356"/>
        <end position="376"/>
    </location>
</feature>
<feature type="topological domain" description="Cytoplasmic" evidence="1">
    <location>
        <begin position="377"/>
        <end position="391"/>
    </location>
</feature>
<name>MDTL_ECOUT</name>
<dbReference type="EMBL" id="CP000243">
    <property type="protein sequence ID" value="ABE09690.1"/>
    <property type="molecule type" value="Genomic_DNA"/>
</dbReference>
<dbReference type="RefSeq" id="WP_000085964.1">
    <property type="nucleotide sequence ID" value="NZ_CP064825.1"/>
</dbReference>
<dbReference type="SMR" id="Q1R4M4"/>
<dbReference type="KEGG" id="eci:UTI89_C4263"/>
<dbReference type="HOGENOM" id="CLU_001265_47_1_6"/>
<dbReference type="Proteomes" id="UP000001952">
    <property type="component" value="Chromosome"/>
</dbReference>
<dbReference type="GO" id="GO:0005886">
    <property type="term" value="C:plasma membrane"/>
    <property type="evidence" value="ECO:0007669"/>
    <property type="project" value="UniProtKB-SubCell"/>
</dbReference>
<dbReference type="GO" id="GO:0022857">
    <property type="term" value="F:transmembrane transporter activity"/>
    <property type="evidence" value="ECO:0007669"/>
    <property type="project" value="UniProtKB-UniRule"/>
</dbReference>
<dbReference type="GO" id="GO:0046677">
    <property type="term" value="P:response to antibiotic"/>
    <property type="evidence" value="ECO:0007669"/>
    <property type="project" value="UniProtKB-KW"/>
</dbReference>
<dbReference type="CDD" id="cd17320">
    <property type="entry name" value="MFS_MdfA_MDR_like"/>
    <property type="match status" value="1"/>
</dbReference>
<dbReference type="FunFam" id="1.20.1720.10:FF:000003">
    <property type="entry name" value="Multidrug resistance protein MdtL"/>
    <property type="match status" value="1"/>
</dbReference>
<dbReference type="Gene3D" id="1.20.1720.10">
    <property type="entry name" value="Multidrug resistance protein D"/>
    <property type="match status" value="1"/>
</dbReference>
<dbReference type="HAMAP" id="MF_01530">
    <property type="entry name" value="MFS_MdtL"/>
    <property type="match status" value="1"/>
</dbReference>
<dbReference type="InterPro" id="IPR011701">
    <property type="entry name" value="MFS"/>
</dbReference>
<dbReference type="InterPro" id="IPR020846">
    <property type="entry name" value="MFS_dom"/>
</dbReference>
<dbReference type="InterPro" id="IPR050189">
    <property type="entry name" value="MFS_Efflux_Transporters"/>
</dbReference>
<dbReference type="InterPro" id="IPR036259">
    <property type="entry name" value="MFS_trans_sf"/>
</dbReference>
<dbReference type="InterPro" id="IPR023697">
    <property type="entry name" value="Multidrug-R_MdtL"/>
</dbReference>
<dbReference type="NCBIfam" id="NF007782">
    <property type="entry name" value="PRK10473.1"/>
    <property type="match status" value="1"/>
</dbReference>
<dbReference type="PANTHER" id="PTHR43124:SF3">
    <property type="entry name" value="CHLORAMPHENICOL EFFLUX PUMP RV0191"/>
    <property type="match status" value="1"/>
</dbReference>
<dbReference type="PANTHER" id="PTHR43124">
    <property type="entry name" value="PURINE EFFLUX PUMP PBUE"/>
    <property type="match status" value="1"/>
</dbReference>
<dbReference type="Pfam" id="PF07690">
    <property type="entry name" value="MFS_1"/>
    <property type="match status" value="1"/>
</dbReference>
<dbReference type="SUPFAM" id="SSF103473">
    <property type="entry name" value="MFS general substrate transporter"/>
    <property type="match status" value="1"/>
</dbReference>
<dbReference type="PROSITE" id="PS50850">
    <property type="entry name" value="MFS"/>
    <property type="match status" value="1"/>
</dbReference>
<keyword id="KW-0046">Antibiotic resistance</keyword>
<keyword id="KW-0997">Cell inner membrane</keyword>
<keyword id="KW-1003">Cell membrane</keyword>
<keyword id="KW-0472">Membrane</keyword>
<keyword id="KW-0812">Transmembrane</keyword>
<keyword id="KW-1133">Transmembrane helix</keyword>
<keyword id="KW-0813">Transport</keyword>
<sequence>MSRFLICSFALVLLYPAGIDMYLVGLPRIAADLNASEAQLHIAFSVYLAGMAAAMLFAGKVADRSGRKPVAIPGAALFIIASVFCSLAETSALFLAGRFLQGLGAGCCYVVAFAILRDTLDDRRRAKVLSLLNGITCIIPVLAPVLGHLIMLKFPWQSLFWTMATMGIALLMLSLFILKETRPAAPTTSDKPRENSESLLNRFFLSRVVITTLSVSVILTFVNTSPVLLMEIMGFERGEYATIMALTAGVSMTVSFSTPFALGIFKPRTLMITSQVLFLAAGITLAVSPSHAVSLFGITLICAGFSVGFGVAMSQALGPFSLRAGVASSTLGIAQVCGSSLWIWLAAVVGIGAWNMLIGILIACSIVSLLLIMFVAPGRPVAAHEEIHHHA</sequence>
<comment type="function">
    <text evidence="2">Confers resistance to chloramphenicol.</text>
</comment>
<comment type="subcellular location">
    <subcellularLocation>
        <location evidence="2">Cell inner membrane</location>
        <topology evidence="2">Multi-pass membrane protein</topology>
    </subcellularLocation>
</comment>
<comment type="similarity">
    <text evidence="2">Belongs to the major facilitator superfamily. DHA1 family. MdtL (TC 2.A.1.2.22) subfamily.</text>
</comment>